<dbReference type="EMBL" id="AF326501">
    <property type="protein sequence ID" value="AAK26768.1"/>
    <property type="molecule type" value="mRNA"/>
</dbReference>
<dbReference type="RefSeq" id="NP_001105030.1">
    <property type="nucleotide sequence ID" value="NM_001111560.1"/>
</dbReference>
<dbReference type="SMR" id="Q9ATL9"/>
<dbReference type="FunCoup" id="Q9ATL9">
    <property type="interactions" value="478"/>
</dbReference>
<dbReference type="STRING" id="4577.Q9ATL9"/>
<dbReference type="PaxDb" id="4577-GRMZM2G027098_P01"/>
<dbReference type="EnsemblPlants" id="Zm00001eb186570_T001">
    <property type="protein sequence ID" value="Zm00001eb186570_P001"/>
    <property type="gene ID" value="Zm00001eb186570"/>
</dbReference>
<dbReference type="GeneID" id="541894"/>
<dbReference type="Gramene" id="Zm00001eb186570_T001">
    <property type="protein sequence ID" value="Zm00001eb186570_P001"/>
    <property type="gene ID" value="Zm00001eb186570"/>
</dbReference>
<dbReference type="KEGG" id="zma:541894"/>
<dbReference type="MaizeGDB" id="403395"/>
<dbReference type="eggNOG" id="KOG0223">
    <property type="taxonomic scope" value="Eukaryota"/>
</dbReference>
<dbReference type="HOGENOM" id="CLU_020019_3_4_1"/>
<dbReference type="InParanoid" id="Q9ATL9"/>
<dbReference type="OMA" id="GNWVYWL"/>
<dbReference type="OrthoDB" id="3222at2759"/>
<dbReference type="Proteomes" id="UP000007305">
    <property type="component" value="Chromosome 4"/>
</dbReference>
<dbReference type="ExpressionAtlas" id="Q9ATL9">
    <property type="expression patterns" value="baseline and differential"/>
</dbReference>
<dbReference type="GO" id="GO:0016020">
    <property type="term" value="C:membrane"/>
    <property type="evidence" value="ECO:0000304"/>
    <property type="project" value="AgBase"/>
</dbReference>
<dbReference type="GO" id="GO:0009705">
    <property type="term" value="C:plant-type vacuole membrane"/>
    <property type="evidence" value="ECO:0000318"/>
    <property type="project" value="GO_Central"/>
</dbReference>
<dbReference type="GO" id="GO:0032586">
    <property type="term" value="C:protein storage vacuole membrane"/>
    <property type="evidence" value="ECO:0000304"/>
    <property type="project" value="AgBase"/>
</dbReference>
<dbReference type="GO" id="GO:0015250">
    <property type="term" value="F:water channel activity"/>
    <property type="evidence" value="ECO:0000318"/>
    <property type="project" value="GO_Central"/>
</dbReference>
<dbReference type="GO" id="GO:0006833">
    <property type="term" value="P:water transport"/>
    <property type="evidence" value="ECO:0000318"/>
    <property type="project" value="GO_Central"/>
</dbReference>
<dbReference type="CDD" id="cd00333">
    <property type="entry name" value="MIP"/>
    <property type="match status" value="1"/>
</dbReference>
<dbReference type="FunFam" id="1.20.1080.10:FF:000002">
    <property type="entry name" value="Probable aquaporin TIP1-1"/>
    <property type="match status" value="1"/>
</dbReference>
<dbReference type="Gene3D" id="1.20.1080.10">
    <property type="entry name" value="Glycerol uptake facilitator protein"/>
    <property type="match status" value="1"/>
</dbReference>
<dbReference type="InterPro" id="IPR023271">
    <property type="entry name" value="Aquaporin-like"/>
</dbReference>
<dbReference type="InterPro" id="IPR034294">
    <property type="entry name" value="Aquaporin_transptr"/>
</dbReference>
<dbReference type="InterPro" id="IPR000425">
    <property type="entry name" value="MIP"/>
</dbReference>
<dbReference type="InterPro" id="IPR022357">
    <property type="entry name" value="MIP_CS"/>
</dbReference>
<dbReference type="NCBIfam" id="TIGR00861">
    <property type="entry name" value="MIP"/>
    <property type="match status" value="1"/>
</dbReference>
<dbReference type="PANTHER" id="PTHR45665:SF37">
    <property type="entry name" value="AQUAPORIN TIP2-3-RELATED"/>
    <property type="match status" value="1"/>
</dbReference>
<dbReference type="PANTHER" id="PTHR45665">
    <property type="entry name" value="AQUAPORIN-8"/>
    <property type="match status" value="1"/>
</dbReference>
<dbReference type="Pfam" id="PF00230">
    <property type="entry name" value="MIP"/>
    <property type="match status" value="1"/>
</dbReference>
<dbReference type="PRINTS" id="PR00783">
    <property type="entry name" value="MINTRINSICP"/>
</dbReference>
<dbReference type="SUPFAM" id="SSF81338">
    <property type="entry name" value="Aquaporin-like"/>
    <property type="match status" value="1"/>
</dbReference>
<dbReference type="PROSITE" id="PS00221">
    <property type="entry name" value="MIP"/>
    <property type="match status" value="1"/>
</dbReference>
<sequence>MVKLAFGSVGDSFSATSIKAYVAEFIATLLFVFAGVGSAIAYGQLTNGGALDPAGLVAIAIAHALALFVGVSVAANISGGHLNPAVTFGLAVGGHITILTGVFYWVAQLLGATVACLLLGFVTHGKAIPTHAVAGISELEGVVFEVVITFALVYTVYATAADPKKGSLGTIAPIAIGFIVGANILAAGPFSGGSMNPARSFGPAVAAGDFAGNWVYWVGPLVGGGLAGLVYGDVFIGGSYQQVADQDYA</sequence>
<organism>
    <name type="scientific">Zea mays</name>
    <name type="common">Maize</name>
    <dbReference type="NCBI Taxonomy" id="4577"/>
    <lineage>
        <taxon>Eukaryota</taxon>
        <taxon>Viridiplantae</taxon>
        <taxon>Streptophyta</taxon>
        <taxon>Embryophyta</taxon>
        <taxon>Tracheophyta</taxon>
        <taxon>Spermatophyta</taxon>
        <taxon>Magnoliopsida</taxon>
        <taxon>Liliopsida</taxon>
        <taxon>Poales</taxon>
        <taxon>Poaceae</taxon>
        <taxon>PACMAD clade</taxon>
        <taxon>Panicoideae</taxon>
        <taxon>Andropogonodae</taxon>
        <taxon>Andropogoneae</taxon>
        <taxon>Tripsacinae</taxon>
        <taxon>Zea</taxon>
    </lineage>
</organism>
<proteinExistence type="evidence at transcript level"/>
<comment type="function">
    <text evidence="1">Aquaporins facilitate the transport of water and small neutral solutes across cell membranes.</text>
</comment>
<comment type="subcellular location">
    <subcellularLocation>
        <location evidence="1">Vacuole membrane</location>
        <topology evidence="1">Multi-pass membrane protein</topology>
    </subcellularLocation>
    <text>Tonoplast.</text>
</comment>
<comment type="domain">
    <text>Aquaporins contain two tandem repeats each containing three membrane-spanning domains and a pore-forming loop with the signature motif Asn-Pro-Ala (NPA).</text>
</comment>
<comment type="similarity">
    <text evidence="3">Belongs to the MIP/aquaporin (TC 1.A.8) family. TIP (TC 1.A.8.10) subfamily.</text>
</comment>
<keyword id="KW-0472">Membrane</keyword>
<keyword id="KW-1185">Reference proteome</keyword>
<keyword id="KW-0677">Repeat</keyword>
<keyword id="KW-0812">Transmembrane</keyword>
<keyword id="KW-1133">Transmembrane helix</keyword>
<keyword id="KW-0813">Transport</keyword>
<keyword id="KW-0926">Vacuole</keyword>
<reference key="1">
    <citation type="journal article" date="2001" name="Plant Physiol.">
        <title>Aquaporins constitute a large and highly divergent protein family in maize.</title>
        <authorList>
            <person name="Chaumont F."/>
            <person name="Barrieu F."/>
            <person name="Wojcik E."/>
            <person name="Chrispeels M.J."/>
            <person name="Jung R."/>
        </authorList>
    </citation>
    <scope>NUCLEOTIDE SEQUENCE [MRNA]</scope>
    <scope>GENE FAMILY</scope>
    <scope>NOMENCLATURE</scope>
    <source>
        <strain>cv. B73</strain>
    </source>
</reference>
<name>TIP21_MAIZE</name>
<evidence type="ECO:0000250" key="1"/>
<evidence type="ECO:0000255" key="2"/>
<evidence type="ECO:0000305" key="3"/>
<feature type="chain" id="PRO_0000286003" description="Aquaporin TIP2-1">
    <location>
        <begin position="1"/>
        <end position="249"/>
    </location>
</feature>
<feature type="transmembrane region" description="Helical; Name=1" evidence="2">
    <location>
        <begin position="20"/>
        <end position="40"/>
    </location>
</feature>
<feature type="transmembrane region" description="Helical; Name=2" evidence="2">
    <location>
        <begin position="54"/>
        <end position="74"/>
    </location>
</feature>
<feature type="transmembrane region" description="Helical; Name=3" evidence="2">
    <location>
        <begin position="102"/>
        <end position="122"/>
    </location>
</feature>
<feature type="transmembrane region" description="Helical; Name=4" evidence="2">
    <location>
        <begin position="141"/>
        <end position="161"/>
    </location>
</feature>
<feature type="transmembrane region" description="Helical; Name=5" evidence="2">
    <location>
        <begin position="168"/>
        <end position="188"/>
    </location>
</feature>
<feature type="transmembrane region" description="Helical; Name=6" evidence="2">
    <location>
        <begin position="217"/>
        <end position="237"/>
    </location>
</feature>
<feature type="short sequence motif" description="NPA 1" evidence="1">
    <location>
        <begin position="83"/>
        <end position="85"/>
    </location>
</feature>
<feature type="short sequence motif" description="NPA 2" evidence="1">
    <location>
        <begin position="196"/>
        <end position="198"/>
    </location>
</feature>
<accession>Q9ATL9</accession>
<gene>
    <name type="primary">TIP2-1</name>
    <name type="synonym">TIP2A</name>
</gene>
<protein>
    <recommendedName>
        <fullName>Aquaporin TIP2-1</fullName>
    </recommendedName>
    <alternativeName>
        <fullName>Tonoplast intrinsic protein 2-1</fullName>
    </alternativeName>
    <alternativeName>
        <fullName>ZmTIP2-1</fullName>
    </alternativeName>
    <alternativeName>
        <fullName>ZmTIP2;1</fullName>
    </alternativeName>
</protein>